<gene>
    <name type="primary">BIN1</name>
    <name type="synonym">AMPHL</name>
</gene>
<keyword id="KW-0002">3D-structure</keyword>
<keyword id="KW-0007">Acetylation</keyword>
<keyword id="KW-0025">Alternative splicing</keyword>
<keyword id="KW-1003">Cell membrane</keyword>
<keyword id="KW-0175">Coiled coil</keyword>
<keyword id="KW-0963">Cytoplasm</keyword>
<keyword id="KW-0217">Developmental protein</keyword>
<keyword id="KW-0221">Differentiation</keyword>
<keyword id="KW-0225">Disease variant</keyword>
<keyword id="KW-0254">Endocytosis</keyword>
<keyword id="KW-0967">Endosome</keyword>
<keyword id="KW-0945">Host-virus interaction</keyword>
<keyword id="KW-0472">Membrane</keyword>
<keyword id="KW-0539">Nucleus</keyword>
<keyword id="KW-0597">Phosphoprotein</keyword>
<keyword id="KW-1267">Proteomics identification</keyword>
<keyword id="KW-1185">Reference proteome</keyword>
<keyword id="KW-0728">SH3 domain</keyword>
<feature type="initiator methionine" description="Removed" evidence="32">
    <location>
        <position position="1"/>
    </location>
</feature>
<feature type="chain" id="PRO_0000192951" description="Myc box-dependent-interacting protein 1">
    <location>
        <begin position="2"/>
        <end position="593"/>
    </location>
</feature>
<feature type="domain" description="BAR" evidence="6">
    <location>
        <begin position="29"/>
        <end position="276"/>
    </location>
</feature>
<feature type="domain" description="SH3" evidence="5">
    <location>
        <begin position="520"/>
        <end position="593"/>
    </location>
</feature>
<feature type="region of interest" description="Interaction with BIN2" evidence="8">
    <location>
        <begin position="2"/>
        <end position="122"/>
    </location>
</feature>
<feature type="region of interest" description="Disordered" evidence="7">
    <location>
        <begin position="280"/>
        <end position="354"/>
    </location>
</feature>
<feature type="region of interest" description="Clathrin-binding">
    <location>
        <begin position="378"/>
        <end position="421"/>
    </location>
</feature>
<feature type="region of interest" description="Disordered" evidence="7">
    <location>
        <begin position="400"/>
        <end position="488"/>
    </location>
</feature>
<feature type="coiled-coil region" evidence="4">
    <location>
        <begin position="15"/>
        <end position="42"/>
    </location>
</feature>
<feature type="coiled-coil region" evidence="4">
    <location>
        <begin position="193"/>
        <end position="267"/>
    </location>
</feature>
<feature type="modified residue" description="N-acetylalanine" evidence="32">
    <location>
        <position position="2"/>
    </location>
</feature>
<feature type="modified residue" description="Phosphoserine" evidence="29 31 33 34">
    <location>
        <position position="296"/>
    </location>
</feature>
<feature type="modified residue" description="Phosphoserine" evidence="29 33 34">
    <location>
        <position position="298"/>
    </location>
</feature>
<feature type="modified residue" description="Phosphoserine" evidence="28 29 33">
    <location>
        <position position="303"/>
    </location>
</feature>
<feature type="modified residue" description="Phosphothreonine" evidence="29 30">
    <location>
        <position position="307"/>
    </location>
</feature>
<feature type="modified residue" description="Phosphothreonine" evidence="29 31">
    <location>
        <position position="323"/>
    </location>
</feature>
<feature type="modified residue" description="Phosphoserine" evidence="29 31">
    <location>
        <position position="331"/>
    </location>
</feature>
<feature type="splice variant" id="VSP_000246" description="In isoform IIB, isoform IIC2, isoform II2, isoform II3, isoform BIN1, isoform BIN1+12A, isoform BIN1-10-13 and isoform BIN1-13." evidence="22 23 24 25 26">
    <location>
        <begin position="174"/>
        <end position="204"/>
    </location>
</feature>
<feature type="splice variant" id="VSP_000247" description="In isoform BIN1, isoform BIN1+12A and isoform BIN1-13." evidence="22 23 25">
    <original>P</original>
    <variation>PRKKSKLFSRLRRKKN</variation>
    <location>
        <position position="285"/>
    </location>
</feature>
<feature type="splice variant" id="VSP_000251" description="In isoform BIN1-10-13 and isoform BIN1-13." evidence="25">
    <location>
        <begin position="335"/>
        <end position="487"/>
    </location>
</feature>
<feature type="splice variant" id="VSP_000250" description="In isoform II3 and isoform BIN1." evidence="22 23 24 25">
    <location>
        <begin position="335"/>
        <end position="457"/>
    </location>
</feature>
<feature type="splice variant" id="VSP_000249" description="In isoform IIC1 and isoform IIC2." evidence="26">
    <location>
        <begin position="335"/>
        <end position="421"/>
    </location>
</feature>
<feature type="splice variant" id="VSP_000248" description="In isoform IID." evidence="26">
    <location>
        <begin position="335"/>
        <end position="377"/>
    </location>
</feature>
<feature type="splice variant" id="VSP_000253" description="In isoform II2 and isoform BIN1+12A." evidence="24 25">
    <location>
        <begin position="378"/>
        <end position="457"/>
    </location>
</feature>
<feature type="splice variant" id="VSP_000252" description="In isoform IIB." evidence="26">
    <location>
        <begin position="378"/>
        <end position="421"/>
    </location>
</feature>
<feature type="sequence variant" id="VAR_081080" description="Found in a sporadic case of centronulear myopathy; uncertain significance; does not induce membrane tubulation in cultured cells." evidence="14">
    <location>
        <position position="21"/>
    </location>
</feature>
<feature type="sequence variant" id="VAR_081081" description="Found in a sporadic case of centronulear myopathy; uncertain significance; does not induce membrane tubulation in cultured cells." evidence="14">
    <original>R</original>
    <variation>C</variation>
    <location>
        <position position="24"/>
    </location>
</feature>
<feature type="sequence variant" id="VAR_037425" description="In CNM2; dbSNP:rs121909273." evidence="11 13">
    <original>K</original>
    <variation>N</variation>
    <location>
        <position position="35"/>
    </location>
</feature>
<feature type="sequence variant" id="VAR_081082" description="In CNM2; dbSNP:rs1249621033." evidence="18">
    <original>R</original>
    <variation>C</variation>
    <location>
        <position position="145"/>
    </location>
</feature>
<feature type="sequence variant" id="VAR_037426" description="In CNM2; results in severely decreased membrane tubulation; dbSNP:rs121909274." evidence="11 13">
    <original>D</original>
    <variation>N</variation>
    <location>
        <position position="151"/>
    </location>
</feature>
<feature type="sequence variant" id="VAR_081083" description="In CNM2; results in severely decreased membrane tubulation; dbSNP:rs267606681." evidence="12 13">
    <original>R</original>
    <variation>Q</variation>
    <location>
        <position position="154"/>
    </location>
</feature>
<feature type="sequence variant" id="VAR_081084" description="In CNM2; dbSNP:rs777176261." evidence="18">
    <original>R</original>
    <variation>C</variation>
    <location>
        <position position="234"/>
    </location>
</feature>
<feature type="sequence variant" id="VAR_081085" description="In CNM2; decreased interaction with DNM2." evidence="11">
    <location>
        <begin position="575"/>
        <end position="593"/>
    </location>
</feature>
<feature type="sequence conflict" description="In Ref. 2; AAB63263." evidence="27" ref="2">
    <original>A</original>
    <variation>P</variation>
    <location>
        <position position="474"/>
    </location>
</feature>
<feature type="sequence conflict" description="In Ref. 10; AAC24126/AAC23750/AAC23751." evidence="27" ref="10">
    <original>A</original>
    <variation>S</variation>
    <location>
        <position position="481"/>
    </location>
</feature>
<feature type="sequence conflict" description="In Ref. 7; AAC23440/AAC23441." evidence="27" ref="7">
    <original>S</original>
    <variation>C</variation>
    <location>
        <position position="510"/>
    </location>
</feature>
<feature type="sequence conflict" description="In Ref. 7; AAC23440/AAC23441." evidence="27" ref="7">
    <original>Q</original>
    <variation>H</variation>
    <location>
        <position position="528"/>
    </location>
</feature>
<feature type="sequence conflict" description="In Ref. 7; AAC23440/AAC23441." evidence="27" ref="7">
    <original>E</original>
    <variation>K</variation>
    <location>
        <position position="576"/>
    </location>
</feature>
<feature type="helix" evidence="37">
    <location>
        <begin position="8"/>
        <end position="33"/>
    </location>
</feature>
<feature type="helix" evidence="36">
    <location>
        <begin position="43"/>
        <end position="89"/>
    </location>
</feature>
<feature type="helix" evidence="36">
    <location>
        <begin position="97"/>
        <end position="121"/>
    </location>
</feature>
<feature type="helix" evidence="36">
    <location>
        <begin position="123"/>
        <end position="131"/>
    </location>
</feature>
<feature type="helix" evidence="36">
    <location>
        <begin position="133"/>
        <end position="161"/>
    </location>
</feature>
<feature type="strand" evidence="36">
    <location>
        <begin position="163"/>
        <end position="165"/>
    </location>
</feature>
<feature type="helix" evidence="36">
    <location>
        <begin position="205"/>
        <end position="268"/>
    </location>
</feature>
<feature type="strand" evidence="35">
    <location>
        <begin position="523"/>
        <end position="527"/>
    </location>
</feature>
<feature type="strand" evidence="35">
    <location>
        <begin position="535"/>
        <end position="537"/>
    </location>
</feature>
<feature type="strand" evidence="35">
    <location>
        <begin position="546"/>
        <end position="549"/>
    </location>
</feature>
<feature type="helix" evidence="35">
    <location>
        <begin position="555"/>
        <end position="557"/>
    </location>
</feature>
<feature type="strand" evidence="35">
    <location>
        <begin position="562"/>
        <end position="567"/>
    </location>
</feature>
<feature type="helix" evidence="35">
    <location>
        <begin position="568"/>
        <end position="572"/>
    </location>
</feature>
<feature type="helix" evidence="35">
    <location>
        <begin position="573"/>
        <end position="579"/>
    </location>
</feature>
<feature type="strand" evidence="35">
    <location>
        <begin position="582"/>
        <end position="585"/>
    </location>
</feature>
<feature type="helix" evidence="35">
    <location>
        <begin position="586"/>
        <end position="588"/>
    </location>
</feature>
<feature type="strand" evidence="35">
    <location>
        <begin position="589"/>
        <end position="591"/>
    </location>
</feature>
<evidence type="ECO:0000250" key="1"/>
<evidence type="ECO:0000250" key="2">
    <source>
        <dbReference type="UniProtKB" id="O08539"/>
    </source>
</evidence>
<evidence type="ECO:0000250" key="3">
    <source>
        <dbReference type="UniProtKB" id="O08839"/>
    </source>
</evidence>
<evidence type="ECO:0000255" key="4"/>
<evidence type="ECO:0000255" key="5">
    <source>
        <dbReference type="PROSITE-ProRule" id="PRU00192"/>
    </source>
</evidence>
<evidence type="ECO:0000255" key="6">
    <source>
        <dbReference type="PROSITE-ProRule" id="PRU00361"/>
    </source>
</evidence>
<evidence type="ECO:0000256" key="7">
    <source>
        <dbReference type="SAM" id="MobiDB-lite"/>
    </source>
</evidence>
<evidence type="ECO:0000269" key="8">
    <source>
    </source>
</evidence>
<evidence type="ECO:0000269" key="9">
    <source>
    </source>
</evidence>
<evidence type="ECO:0000269" key="10">
    <source>
    </source>
</evidence>
<evidence type="ECO:0000269" key="11">
    <source>
    </source>
</evidence>
<evidence type="ECO:0000269" key="12">
    <source>
    </source>
</evidence>
<evidence type="ECO:0000269" key="13">
    <source>
    </source>
</evidence>
<evidence type="ECO:0000269" key="14">
    <source>
    </source>
</evidence>
<evidence type="ECO:0000269" key="15">
    <source>
    </source>
</evidence>
<evidence type="ECO:0000269" key="16">
    <source>
    </source>
</evidence>
<evidence type="ECO:0000269" key="17">
    <source>
    </source>
</evidence>
<evidence type="ECO:0000269" key="18">
    <source>
    </source>
</evidence>
<evidence type="ECO:0000269" key="19">
    <source>
    </source>
</evidence>
<evidence type="ECO:0000269" key="20">
    <source>
    </source>
</evidence>
<evidence type="ECO:0000269" key="21">
    <source>
    </source>
</evidence>
<evidence type="ECO:0000303" key="22">
    <source>
    </source>
</evidence>
<evidence type="ECO:0000303" key="23">
    <source>
    </source>
</evidence>
<evidence type="ECO:0000303" key="24">
    <source>
    </source>
</evidence>
<evidence type="ECO:0000303" key="25">
    <source>
    </source>
</evidence>
<evidence type="ECO:0000303" key="26">
    <source>
    </source>
</evidence>
<evidence type="ECO:0000305" key="27"/>
<evidence type="ECO:0007744" key="28">
    <source>
    </source>
</evidence>
<evidence type="ECO:0007744" key="29">
    <source>
    </source>
</evidence>
<evidence type="ECO:0007744" key="30">
    <source>
    </source>
</evidence>
<evidence type="ECO:0007744" key="31">
    <source>
    </source>
</evidence>
<evidence type="ECO:0007744" key="32">
    <source>
    </source>
</evidence>
<evidence type="ECO:0007744" key="33">
    <source>
    </source>
</evidence>
<evidence type="ECO:0007744" key="34">
    <source>
    </source>
</evidence>
<evidence type="ECO:0007829" key="35">
    <source>
        <dbReference type="PDB" id="1MUZ"/>
    </source>
</evidence>
<evidence type="ECO:0007829" key="36">
    <source>
        <dbReference type="PDB" id="2FIC"/>
    </source>
</evidence>
<evidence type="ECO:0007829" key="37">
    <source>
        <dbReference type="PDB" id="2RMY"/>
    </source>
</evidence>
<protein>
    <recommendedName>
        <fullName>Myc box-dependent-interacting protein 1</fullName>
    </recommendedName>
    <alternativeName>
        <fullName>Amphiphysin II</fullName>
    </alternativeName>
    <alternativeName>
        <fullName>Amphiphysin-like protein</fullName>
    </alternativeName>
    <alternativeName>
        <fullName>Box-dependent myc-interacting protein 1</fullName>
    </alternativeName>
    <alternativeName>
        <fullName>Bridging integrator 1</fullName>
    </alternativeName>
</protein>
<dbReference type="EMBL" id="AF004015">
    <property type="protein sequence ID" value="AAC51345.1"/>
    <property type="molecule type" value="mRNA"/>
</dbReference>
<dbReference type="EMBL" id="AF070576">
    <property type="protein sequence ID" value="AAC28646.1"/>
    <property type="molecule type" value="mRNA"/>
</dbReference>
<dbReference type="EMBL" id="AF001383">
    <property type="protein sequence ID" value="AAB61363.1"/>
    <property type="molecule type" value="mRNA"/>
</dbReference>
<dbReference type="EMBL" id="U68485">
    <property type="protein sequence ID" value="AAC17461.1"/>
    <property type="molecule type" value="mRNA"/>
</dbReference>
<dbReference type="EMBL" id="AF043898">
    <property type="protein sequence ID" value="AAC39710.1"/>
    <property type="molecule type" value="mRNA"/>
</dbReference>
<dbReference type="EMBL" id="AF043899">
    <property type="protein sequence ID" value="AAC39711.1"/>
    <property type="molecule type" value="mRNA"/>
</dbReference>
<dbReference type="EMBL" id="AF043900">
    <property type="protein sequence ID" value="AAC39712.1"/>
    <property type="molecule type" value="mRNA"/>
</dbReference>
<dbReference type="EMBL" id="AF043901">
    <property type="protein sequence ID" value="AAC39713.1"/>
    <property type="molecule type" value="mRNA"/>
</dbReference>
<dbReference type="EMBL" id="U87558">
    <property type="protein sequence ID" value="AAB63263.1"/>
    <property type="molecule type" value="mRNA"/>
</dbReference>
<dbReference type="EMBL" id="AF068914">
    <property type="protein sequence ID" value="AAC24126.1"/>
    <property type="molecule type" value="mRNA"/>
</dbReference>
<dbReference type="EMBL" id="AF068915">
    <property type="protein sequence ID" value="AAC24127.1"/>
    <property type="molecule type" value="mRNA"/>
</dbReference>
<dbReference type="EMBL" id="AF068916">
    <property type="protein sequence ID" value="AAC24128.1"/>
    <property type="molecule type" value="mRNA"/>
</dbReference>
<dbReference type="EMBL" id="AF068917">
    <property type="protein sequence ID" value="AAC23750.1"/>
    <property type="molecule type" value="mRNA"/>
</dbReference>
<dbReference type="EMBL" id="AF068918">
    <property type="protein sequence ID" value="AAC23751.1"/>
    <property type="molecule type" value="mRNA"/>
</dbReference>
<dbReference type="EMBL" id="U84004">
    <property type="protein sequence ID" value="AAC23440.1"/>
    <property type="molecule type" value="Genomic_DNA"/>
</dbReference>
<dbReference type="EMBL" id="U83999">
    <property type="protein sequence ID" value="AAC23440.1"/>
    <property type="status" value="JOINED"/>
    <property type="molecule type" value="Genomic_DNA"/>
</dbReference>
<dbReference type="EMBL" id="U84001">
    <property type="protein sequence ID" value="AAC23440.1"/>
    <property type="status" value="JOINED"/>
    <property type="molecule type" value="Genomic_DNA"/>
</dbReference>
<dbReference type="EMBL" id="U84002">
    <property type="protein sequence ID" value="AAC23440.1"/>
    <property type="status" value="JOINED"/>
    <property type="molecule type" value="Genomic_DNA"/>
</dbReference>
<dbReference type="EMBL" id="U84003">
    <property type="protein sequence ID" value="AAC23440.1"/>
    <property type="status" value="JOINED"/>
    <property type="molecule type" value="Genomic_DNA"/>
</dbReference>
<dbReference type="EMBL" id="U84004">
    <property type="protein sequence ID" value="AAC23441.1"/>
    <property type="status" value="ALT_INIT"/>
    <property type="molecule type" value="Genomic_DNA"/>
</dbReference>
<dbReference type="EMBL" id="U83999">
    <property type="protein sequence ID" value="AAC23441.1"/>
    <property type="status" value="JOINED"/>
    <property type="molecule type" value="Genomic_DNA"/>
</dbReference>
<dbReference type="EMBL" id="U84001">
    <property type="protein sequence ID" value="AAC23441.1"/>
    <property type="status" value="JOINED"/>
    <property type="molecule type" value="Genomic_DNA"/>
</dbReference>
<dbReference type="EMBL" id="U84002">
    <property type="protein sequence ID" value="AAC23441.1"/>
    <property type="status" value="JOINED"/>
    <property type="molecule type" value="Genomic_DNA"/>
</dbReference>
<dbReference type="EMBL" id="U84003">
    <property type="protein sequence ID" value="AAC23441.1"/>
    <property type="status" value="JOINED"/>
    <property type="molecule type" value="Genomic_DNA"/>
</dbReference>
<dbReference type="EMBL" id="AL713697">
    <property type="protein sequence ID" value="CAD28496.1"/>
    <property type="molecule type" value="mRNA"/>
</dbReference>
<dbReference type="EMBL" id="AC012508">
    <property type="protein sequence ID" value="AAY24328.1"/>
    <property type="molecule type" value="Genomic_DNA"/>
</dbReference>
<dbReference type="EMBL" id="CH471103">
    <property type="protein sequence ID" value="EAW95302.1"/>
    <property type="molecule type" value="Genomic_DNA"/>
</dbReference>
<dbReference type="CCDS" id="CCDS2137.1">
    <molecule id="O00499-8"/>
</dbReference>
<dbReference type="CCDS" id="CCDS2138.1">
    <molecule id="O00499-1"/>
</dbReference>
<dbReference type="CCDS" id="CCDS2139.1">
    <molecule id="O00499-5"/>
</dbReference>
<dbReference type="CCDS" id="CCDS2140.1">
    <molecule id="O00499-3"/>
</dbReference>
<dbReference type="CCDS" id="CCDS2141.1">
    <molecule id="O00499-11"/>
</dbReference>
<dbReference type="CCDS" id="CCDS2142.1">
    <molecule id="O00499-2"/>
</dbReference>
<dbReference type="CCDS" id="CCDS2143.1">
    <molecule id="O00499-9"/>
</dbReference>
<dbReference type="CCDS" id="CCDS42743.1">
    <molecule id="O00499-4"/>
</dbReference>
<dbReference type="CCDS" id="CCDS42744.1">
    <molecule id="O00499-6"/>
</dbReference>
<dbReference type="CCDS" id="CCDS46403.1">
    <molecule id="O00499-7"/>
</dbReference>
<dbReference type="CCDS" id="CCDS82508.1">
    <molecule id="O00499-10"/>
</dbReference>
<dbReference type="PIR" id="JC5593">
    <property type="entry name" value="JC5593"/>
</dbReference>
<dbReference type="RefSeq" id="NP_001307561.1">
    <molecule id="O00499-10"/>
    <property type="nucleotide sequence ID" value="NM_001320632.2"/>
</dbReference>
<dbReference type="RefSeq" id="NP_001307562.1">
    <property type="nucleotide sequence ID" value="NM_001320633.1"/>
</dbReference>
<dbReference type="RefSeq" id="NP_001307569.1">
    <property type="nucleotide sequence ID" value="NM_001320640.1"/>
</dbReference>
<dbReference type="RefSeq" id="NP_001307570.1">
    <property type="nucleotide sequence ID" value="NM_001320641.1"/>
</dbReference>
<dbReference type="RefSeq" id="NP_001307571.1">
    <property type="nucleotide sequence ID" value="NM_001320642.1"/>
</dbReference>
<dbReference type="RefSeq" id="NP_004296.1">
    <molecule id="O00499-8"/>
    <property type="nucleotide sequence ID" value="NM_004305.4"/>
</dbReference>
<dbReference type="RefSeq" id="NP_647593.1">
    <molecule id="O00499-1"/>
    <property type="nucleotide sequence ID" value="NM_139343.3"/>
</dbReference>
<dbReference type="RefSeq" id="NP_647594.1">
    <molecule id="O00499-5"/>
    <property type="nucleotide sequence ID" value="NM_139344.3"/>
</dbReference>
<dbReference type="RefSeq" id="NP_647595.1">
    <molecule id="O00499-3"/>
    <property type="nucleotide sequence ID" value="NM_139345.3"/>
</dbReference>
<dbReference type="RefSeq" id="NP_647596.1">
    <molecule id="O00499-11"/>
    <property type="nucleotide sequence ID" value="NM_139346.3"/>
</dbReference>
<dbReference type="RefSeq" id="NP_647597.1">
    <molecule id="O00499-2"/>
    <property type="nucleotide sequence ID" value="NM_139347.3"/>
</dbReference>
<dbReference type="RefSeq" id="NP_647598.1">
    <molecule id="O00499-6"/>
    <property type="nucleotide sequence ID" value="NM_139348.3"/>
</dbReference>
<dbReference type="RefSeq" id="NP_647599.1">
    <molecule id="O00499-4"/>
    <property type="nucleotide sequence ID" value="NM_139349.3"/>
</dbReference>
<dbReference type="RefSeq" id="NP_647600.1">
    <molecule id="O00499-7"/>
    <property type="nucleotide sequence ID" value="NM_139350.3"/>
</dbReference>
<dbReference type="RefSeq" id="NP_647601.1">
    <molecule id="O00499-9"/>
    <property type="nucleotide sequence ID" value="NM_139351.3"/>
</dbReference>
<dbReference type="PDB" id="1MUZ">
    <property type="method" value="NMR"/>
    <property type="chains" value="A=513-593"/>
</dbReference>
<dbReference type="PDB" id="1MV0">
    <property type="method" value="NMR"/>
    <property type="chains" value="B=513-593"/>
</dbReference>
<dbReference type="PDB" id="1MV3">
    <property type="method" value="NMR"/>
    <property type="chains" value="A=301-593"/>
</dbReference>
<dbReference type="PDB" id="2FIC">
    <property type="method" value="X-ray"/>
    <property type="resolution" value="1.99 A"/>
    <property type="chains" value="A/B=1-272"/>
</dbReference>
<dbReference type="PDB" id="2RMY">
    <property type="method" value="NMR"/>
    <property type="chains" value="A=1-33"/>
</dbReference>
<dbReference type="PDB" id="2RND">
    <property type="method" value="NMR"/>
    <property type="chains" value="A=1-33"/>
</dbReference>
<dbReference type="PDB" id="5I22">
    <property type="method" value="NMR"/>
    <property type="chains" value="A=513-593"/>
</dbReference>
<dbReference type="PDBsum" id="1MUZ"/>
<dbReference type="PDBsum" id="1MV0"/>
<dbReference type="PDBsum" id="1MV3"/>
<dbReference type="PDBsum" id="2FIC"/>
<dbReference type="PDBsum" id="2RMY"/>
<dbReference type="PDBsum" id="2RND"/>
<dbReference type="PDBsum" id="5I22"/>
<dbReference type="BMRB" id="O00499"/>
<dbReference type="SMR" id="O00499"/>
<dbReference type="BioGRID" id="106771">
    <property type="interactions" value="111"/>
</dbReference>
<dbReference type="ComplexPortal" id="CPX-514">
    <property type="entry name" value="c-MYC-BIN1 complex"/>
</dbReference>
<dbReference type="CORUM" id="O00499"/>
<dbReference type="DIP" id="DIP-41480N"/>
<dbReference type="ELM" id="O00499"/>
<dbReference type="FunCoup" id="O00499">
    <property type="interactions" value="922"/>
</dbReference>
<dbReference type="IntAct" id="O00499">
    <property type="interactions" value="83"/>
</dbReference>
<dbReference type="MINT" id="O00499"/>
<dbReference type="STRING" id="9606.ENSP00000316779"/>
<dbReference type="MoonDB" id="O00499">
    <property type="type" value="Predicted"/>
</dbReference>
<dbReference type="GlyCosmos" id="O00499">
    <property type="glycosylation" value="2 sites, 1 glycan"/>
</dbReference>
<dbReference type="GlyGen" id="O00499">
    <property type="glycosylation" value="5 sites, 1 O-linked glycan (2 sites)"/>
</dbReference>
<dbReference type="iPTMnet" id="O00499"/>
<dbReference type="MetOSite" id="O00499"/>
<dbReference type="PhosphoSitePlus" id="O00499"/>
<dbReference type="BioMuta" id="BIN1"/>
<dbReference type="jPOST" id="O00499"/>
<dbReference type="MassIVE" id="O00499"/>
<dbReference type="PaxDb" id="9606-ENSP00000316779"/>
<dbReference type="PeptideAtlas" id="O00499"/>
<dbReference type="ProteomicsDB" id="47934">
    <molecule id="O00499-1"/>
</dbReference>
<dbReference type="ProteomicsDB" id="47935">
    <molecule id="O00499-10"/>
</dbReference>
<dbReference type="ProteomicsDB" id="47936">
    <molecule id="O00499-11"/>
</dbReference>
<dbReference type="ProteomicsDB" id="47937">
    <molecule id="O00499-2"/>
</dbReference>
<dbReference type="ProteomicsDB" id="47938">
    <molecule id="O00499-3"/>
</dbReference>
<dbReference type="ProteomicsDB" id="47939">
    <molecule id="O00499-4"/>
</dbReference>
<dbReference type="ProteomicsDB" id="47940">
    <molecule id="O00499-5"/>
</dbReference>
<dbReference type="ProteomicsDB" id="47941">
    <molecule id="O00499-6"/>
</dbReference>
<dbReference type="ProteomicsDB" id="47942">
    <molecule id="O00499-7"/>
</dbReference>
<dbReference type="ProteomicsDB" id="47943">
    <molecule id="O00499-8"/>
</dbReference>
<dbReference type="ProteomicsDB" id="47944">
    <molecule id="O00499-9"/>
</dbReference>
<dbReference type="Pumba" id="O00499"/>
<dbReference type="Antibodypedia" id="1297">
    <property type="antibodies" value="443 antibodies from 41 providers"/>
</dbReference>
<dbReference type="DNASU" id="274"/>
<dbReference type="Ensembl" id="ENST00000259238.8">
    <molecule id="O00499-11"/>
    <property type="protein sequence ID" value="ENSP00000259238.4"/>
    <property type="gene ID" value="ENSG00000136717.15"/>
</dbReference>
<dbReference type="Ensembl" id="ENST00000316724.10">
    <molecule id="O00499-1"/>
    <property type="protein sequence ID" value="ENSP00000316779.5"/>
    <property type="gene ID" value="ENSG00000136717.15"/>
</dbReference>
<dbReference type="Ensembl" id="ENST00000346226.7">
    <molecule id="O00499-2"/>
    <property type="protein sequence ID" value="ENSP00000315411.3"/>
    <property type="gene ID" value="ENSG00000136717.15"/>
</dbReference>
<dbReference type="Ensembl" id="ENST00000348750.8">
    <molecule id="O00499-9"/>
    <property type="protein sequence ID" value="ENSP00000259237.5"/>
    <property type="gene ID" value="ENSG00000136717.15"/>
</dbReference>
<dbReference type="Ensembl" id="ENST00000351659.7">
    <molecule id="O00499-3"/>
    <property type="protein sequence ID" value="ENSP00000315388.3"/>
    <property type="gene ID" value="ENSG00000136717.15"/>
</dbReference>
<dbReference type="Ensembl" id="ENST00000352848.8">
    <molecule id="O00499-8"/>
    <property type="protein sequence ID" value="ENSP00000315284.4"/>
    <property type="gene ID" value="ENSG00000136717.15"/>
</dbReference>
<dbReference type="Ensembl" id="ENST00000357970.7">
    <molecule id="O00499-5"/>
    <property type="protein sequence ID" value="ENSP00000350654.3"/>
    <property type="gene ID" value="ENSG00000136717.15"/>
</dbReference>
<dbReference type="Ensembl" id="ENST00000376113.6">
    <molecule id="O00499-10"/>
    <property type="protein sequence ID" value="ENSP00000365281.2"/>
    <property type="gene ID" value="ENSG00000136717.15"/>
</dbReference>
<dbReference type="Ensembl" id="ENST00000393040.7">
    <molecule id="O00499-6"/>
    <property type="protein sequence ID" value="ENSP00000376760.3"/>
    <property type="gene ID" value="ENSG00000136717.15"/>
</dbReference>
<dbReference type="Ensembl" id="ENST00000393041.7">
    <molecule id="O00499-4"/>
    <property type="protein sequence ID" value="ENSP00000376761.3"/>
    <property type="gene ID" value="ENSG00000136717.15"/>
</dbReference>
<dbReference type="Ensembl" id="ENST00000409400.1">
    <molecule id="O00499-7"/>
    <property type="protein sequence ID" value="ENSP00000386797.1"/>
    <property type="gene ID" value="ENSG00000136717.15"/>
</dbReference>
<dbReference type="GeneID" id="274"/>
<dbReference type="KEGG" id="hsa:274"/>
<dbReference type="MANE-Select" id="ENST00000316724.10">
    <property type="protein sequence ID" value="ENSP00000316779.5"/>
    <property type="RefSeq nucleotide sequence ID" value="NM_139343.3"/>
    <property type="RefSeq protein sequence ID" value="NP_647593.1"/>
</dbReference>
<dbReference type="UCSC" id="uc002tns.3">
    <molecule id="O00499-1"/>
    <property type="organism name" value="human"/>
</dbReference>
<dbReference type="AGR" id="HGNC:1052"/>
<dbReference type="CTD" id="274"/>
<dbReference type="DisGeNET" id="274"/>
<dbReference type="GeneCards" id="BIN1"/>
<dbReference type="HGNC" id="HGNC:1052">
    <property type="gene designation" value="BIN1"/>
</dbReference>
<dbReference type="HPA" id="ENSG00000136717">
    <property type="expression patterns" value="Group enriched (skeletal muscle, tongue)"/>
</dbReference>
<dbReference type="MalaCards" id="BIN1"/>
<dbReference type="MIM" id="255200">
    <property type="type" value="phenotype"/>
</dbReference>
<dbReference type="MIM" id="601248">
    <property type="type" value="gene"/>
</dbReference>
<dbReference type="neXtProt" id="NX_O00499"/>
<dbReference type="NIAGADS" id="ENSG00000136717"/>
<dbReference type="OpenTargets" id="ENSG00000136717"/>
<dbReference type="Orphanet" id="169189">
    <property type="disease" value="Autosomal dominant centronuclear myopathy"/>
</dbReference>
<dbReference type="Orphanet" id="169186">
    <property type="disease" value="Autosomal recessive centronuclear myopathy"/>
</dbReference>
<dbReference type="PharmGKB" id="PA25355"/>
<dbReference type="VEuPathDB" id="HostDB:ENSG00000136717"/>
<dbReference type="eggNOG" id="KOG3771">
    <property type="taxonomic scope" value="Eukaryota"/>
</dbReference>
<dbReference type="GeneTree" id="ENSGT00950000182882"/>
<dbReference type="HOGENOM" id="CLU_017859_3_0_1"/>
<dbReference type="InParanoid" id="O00499"/>
<dbReference type="OMA" id="QEYDYYN"/>
<dbReference type="OrthoDB" id="446293at2759"/>
<dbReference type="PAN-GO" id="O00499">
    <property type="GO annotations" value="4 GO annotations based on evolutionary models"/>
</dbReference>
<dbReference type="PhylomeDB" id="O00499"/>
<dbReference type="TreeFam" id="TF313542"/>
<dbReference type="PathwayCommons" id="O00499"/>
<dbReference type="Reactome" id="R-HSA-8856828">
    <property type="pathway name" value="Clathrin-mediated endocytosis"/>
</dbReference>
<dbReference type="SignaLink" id="O00499"/>
<dbReference type="SIGNOR" id="O00499"/>
<dbReference type="BioGRID-ORCS" id="274">
    <property type="hits" value="13 hits in 1161 CRISPR screens"/>
</dbReference>
<dbReference type="CD-CODE" id="FB4E32DD">
    <property type="entry name" value="Presynaptic clusters and postsynaptic densities"/>
</dbReference>
<dbReference type="ChiTaRS" id="BIN1">
    <property type="organism name" value="human"/>
</dbReference>
<dbReference type="EvolutionaryTrace" id="O00499"/>
<dbReference type="GeneWiki" id="BIN1"/>
<dbReference type="GenomeRNAi" id="274"/>
<dbReference type="Pharos" id="O00499">
    <property type="development level" value="Tbio"/>
</dbReference>
<dbReference type="PRO" id="PR:O00499"/>
<dbReference type="Proteomes" id="UP000005640">
    <property type="component" value="Chromosome 2"/>
</dbReference>
<dbReference type="RNAct" id="O00499">
    <property type="molecule type" value="protein"/>
</dbReference>
<dbReference type="Bgee" id="ENSG00000136717">
    <property type="expression patterns" value="Expressed in gastrocnemius and 203 other cell types or tissues"/>
</dbReference>
<dbReference type="ExpressionAtlas" id="O00499">
    <property type="expression patterns" value="baseline and differential"/>
</dbReference>
<dbReference type="GO" id="GO:0015629">
    <property type="term" value="C:actin cytoskeleton"/>
    <property type="evidence" value="ECO:0000304"/>
    <property type="project" value="ProtInc"/>
</dbReference>
<dbReference type="GO" id="GO:0030424">
    <property type="term" value="C:axon"/>
    <property type="evidence" value="ECO:0000314"/>
    <property type="project" value="Alzheimers_University_of_Toronto"/>
</dbReference>
<dbReference type="GO" id="GO:0043194">
    <property type="term" value="C:axon initial segment"/>
    <property type="evidence" value="ECO:0000250"/>
    <property type="project" value="Alzheimers_University_of_Toronto"/>
</dbReference>
<dbReference type="GO" id="GO:0043679">
    <property type="term" value="C:axon terminus"/>
    <property type="evidence" value="ECO:0007669"/>
    <property type="project" value="Ensembl"/>
</dbReference>
<dbReference type="GO" id="GO:0044300">
    <property type="term" value="C:cerebellar mossy fiber"/>
    <property type="evidence" value="ECO:0007669"/>
    <property type="project" value="Ensembl"/>
</dbReference>
<dbReference type="GO" id="GO:0005737">
    <property type="term" value="C:cytoplasm"/>
    <property type="evidence" value="ECO:0000314"/>
    <property type="project" value="LIFEdb"/>
</dbReference>
<dbReference type="GO" id="GO:0005829">
    <property type="term" value="C:cytosol"/>
    <property type="evidence" value="ECO:0000314"/>
    <property type="project" value="HPA"/>
</dbReference>
<dbReference type="GO" id="GO:0030425">
    <property type="term" value="C:dendrite"/>
    <property type="evidence" value="ECO:0000250"/>
    <property type="project" value="ARUK-UCL"/>
</dbReference>
<dbReference type="GO" id="GO:0005768">
    <property type="term" value="C:endosome"/>
    <property type="evidence" value="ECO:0007669"/>
    <property type="project" value="UniProtKB-SubCell"/>
</dbReference>
<dbReference type="GO" id="GO:0098850">
    <property type="term" value="C:extrinsic component of synaptic vesicle membrane"/>
    <property type="evidence" value="ECO:0007669"/>
    <property type="project" value="Ensembl"/>
</dbReference>
<dbReference type="GO" id="GO:0098978">
    <property type="term" value="C:glutamatergic synapse"/>
    <property type="evidence" value="ECO:0007669"/>
    <property type="project" value="Ensembl"/>
</dbReference>
<dbReference type="GO" id="GO:0031674">
    <property type="term" value="C:I band"/>
    <property type="evidence" value="ECO:0000250"/>
    <property type="project" value="Alzheimers_University_of_Toronto"/>
</dbReference>
<dbReference type="GO" id="GO:0060987">
    <property type="term" value="C:lipid tube"/>
    <property type="evidence" value="ECO:0000315"/>
    <property type="project" value="Alzheimers_University_of_Toronto"/>
</dbReference>
<dbReference type="GO" id="GO:0016020">
    <property type="term" value="C:membrane"/>
    <property type="evidence" value="ECO:0000314"/>
    <property type="project" value="AgBase"/>
</dbReference>
<dbReference type="GO" id="GO:0033268">
    <property type="term" value="C:node of Ranvier"/>
    <property type="evidence" value="ECO:0000250"/>
    <property type="project" value="Alzheimers_University_of_Toronto"/>
</dbReference>
<dbReference type="GO" id="GO:0005634">
    <property type="term" value="C:nucleus"/>
    <property type="evidence" value="ECO:0000314"/>
    <property type="project" value="ARUK-UCL"/>
</dbReference>
<dbReference type="GO" id="GO:0005886">
    <property type="term" value="C:plasma membrane"/>
    <property type="evidence" value="ECO:0000318"/>
    <property type="project" value="GO_Central"/>
</dbReference>
<dbReference type="GO" id="GO:0090571">
    <property type="term" value="C:RNA polymerase II transcription repressor complex"/>
    <property type="evidence" value="ECO:0000353"/>
    <property type="project" value="ComplexPortal"/>
</dbReference>
<dbReference type="GO" id="GO:0008021">
    <property type="term" value="C:synaptic vesicle"/>
    <property type="evidence" value="ECO:0000318"/>
    <property type="project" value="GO_Central"/>
</dbReference>
<dbReference type="GO" id="GO:0030315">
    <property type="term" value="C:T-tubule"/>
    <property type="evidence" value="ECO:0000250"/>
    <property type="project" value="Alzheimers_University_of_Toronto"/>
</dbReference>
<dbReference type="GO" id="GO:0043196">
    <property type="term" value="C:varicosity"/>
    <property type="evidence" value="ECO:0007669"/>
    <property type="project" value="Ensembl"/>
</dbReference>
<dbReference type="GO" id="GO:0031982">
    <property type="term" value="C:vesicle"/>
    <property type="evidence" value="ECO:0000250"/>
    <property type="project" value="ARUK-UCL"/>
</dbReference>
<dbReference type="GO" id="GO:0030018">
    <property type="term" value="C:Z disc"/>
    <property type="evidence" value="ECO:0000250"/>
    <property type="project" value="Alzheimers_University_of_Toronto"/>
</dbReference>
<dbReference type="GO" id="GO:0051015">
    <property type="term" value="F:actin filament binding"/>
    <property type="evidence" value="ECO:0000314"/>
    <property type="project" value="WormBase"/>
</dbReference>
<dbReference type="GO" id="GO:0019828">
    <property type="term" value="F:aspartic-type endopeptidase inhibitor activity"/>
    <property type="evidence" value="ECO:0000315"/>
    <property type="project" value="ARUK-UCL"/>
</dbReference>
<dbReference type="GO" id="GO:0030276">
    <property type="term" value="F:clathrin binding"/>
    <property type="evidence" value="ECO:0000304"/>
    <property type="project" value="ARUK-UCL"/>
</dbReference>
<dbReference type="GO" id="GO:0051020">
    <property type="term" value="F:GTPase binding"/>
    <property type="evidence" value="ECO:0007669"/>
    <property type="project" value="Ensembl"/>
</dbReference>
<dbReference type="GO" id="GO:0042802">
    <property type="term" value="F:identical protein binding"/>
    <property type="evidence" value="ECO:0000353"/>
    <property type="project" value="IntAct"/>
</dbReference>
<dbReference type="GO" id="GO:0008289">
    <property type="term" value="F:lipid binding"/>
    <property type="evidence" value="ECO:0000269"/>
    <property type="project" value="DisProt"/>
</dbReference>
<dbReference type="GO" id="GO:0005543">
    <property type="term" value="F:phospholipid binding"/>
    <property type="evidence" value="ECO:0000318"/>
    <property type="project" value="GO_Central"/>
</dbReference>
<dbReference type="GO" id="GO:0002020">
    <property type="term" value="F:protease binding"/>
    <property type="evidence" value="ECO:0000353"/>
    <property type="project" value="ARUK-UCL"/>
</dbReference>
<dbReference type="GO" id="GO:0051087">
    <property type="term" value="F:protein-folding chaperone binding"/>
    <property type="evidence" value="ECO:0000353"/>
    <property type="project" value="ARUK-UCL"/>
</dbReference>
<dbReference type="GO" id="GO:0070063">
    <property type="term" value="F:RNA polymerase binding"/>
    <property type="evidence" value="ECO:0000353"/>
    <property type="project" value="AgBase"/>
</dbReference>
<dbReference type="GO" id="GO:0048156">
    <property type="term" value="F:tau protein binding"/>
    <property type="evidence" value="ECO:0000353"/>
    <property type="project" value="ARUK-UCL"/>
</dbReference>
<dbReference type="GO" id="GO:0007010">
    <property type="term" value="P:cytoskeleton organization"/>
    <property type="evidence" value="ECO:0000304"/>
    <property type="project" value="ARUK-UCL"/>
</dbReference>
<dbReference type="GO" id="GO:0006897">
    <property type="term" value="P:endocytosis"/>
    <property type="evidence" value="ECO:0000304"/>
    <property type="project" value="ARUK-UCL"/>
</dbReference>
<dbReference type="GO" id="GO:0008333">
    <property type="term" value="P:endosome to lysosome transport"/>
    <property type="evidence" value="ECO:0000315"/>
    <property type="project" value="ARUK-UCL"/>
</dbReference>
<dbReference type="GO" id="GO:0060988">
    <property type="term" value="P:lipid tube assembly"/>
    <property type="evidence" value="ECO:0000314"/>
    <property type="project" value="DisProt"/>
</dbReference>
<dbReference type="GO" id="GO:1902430">
    <property type="term" value="P:negative regulation of amyloid-beta formation"/>
    <property type="evidence" value="ECO:0000315"/>
    <property type="project" value="ARUK-UCL"/>
</dbReference>
<dbReference type="GO" id="GO:1904878">
    <property type="term" value="P:negative regulation of calcium ion transmembrane transport via high voltage-gated calcium channel"/>
    <property type="evidence" value="ECO:0000250"/>
    <property type="project" value="ARUK-UCL"/>
</dbReference>
<dbReference type="GO" id="GO:1901380">
    <property type="term" value="P:negative regulation of potassium ion transmembrane transport"/>
    <property type="evidence" value="ECO:0000250"/>
    <property type="project" value="ARUK-UCL"/>
</dbReference>
<dbReference type="GO" id="GO:0000122">
    <property type="term" value="P:negative regulation of transcription by RNA polymerase II"/>
    <property type="evidence" value="ECO:0000314"/>
    <property type="project" value="ComplexPortal"/>
</dbReference>
<dbReference type="GO" id="GO:1903946">
    <property type="term" value="P:negative regulation of ventricular cardiac muscle cell action potential"/>
    <property type="evidence" value="ECO:0000250"/>
    <property type="project" value="ARUK-UCL"/>
</dbReference>
<dbReference type="GO" id="GO:0006997">
    <property type="term" value="P:nucleus organization"/>
    <property type="evidence" value="ECO:0000315"/>
    <property type="project" value="WormBase"/>
</dbReference>
<dbReference type="GO" id="GO:0030838">
    <property type="term" value="P:positive regulation of actin filament polymerization"/>
    <property type="evidence" value="ECO:0000250"/>
    <property type="project" value="ARUK-UCL"/>
</dbReference>
<dbReference type="GO" id="GO:0043065">
    <property type="term" value="P:positive regulation of apoptotic process"/>
    <property type="evidence" value="ECO:0000314"/>
    <property type="project" value="AgBase"/>
</dbReference>
<dbReference type="GO" id="GO:0048711">
    <property type="term" value="P:positive regulation of astrocyte differentiation"/>
    <property type="evidence" value="ECO:0000315"/>
    <property type="project" value="Alzheimers_University_of_Toronto"/>
</dbReference>
<dbReference type="GO" id="GO:0045807">
    <property type="term" value="P:positive regulation of endocytosis"/>
    <property type="evidence" value="ECO:0007669"/>
    <property type="project" value="Ensembl"/>
</dbReference>
<dbReference type="GO" id="GO:0010564">
    <property type="term" value="P:regulation of cell cycle process"/>
    <property type="evidence" value="ECO:0000314"/>
    <property type="project" value="ComplexPortal"/>
</dbReference>
<dbReference type="GO" id="GO:0086091">
    <property type="term" value="P:regulation of heart rate by cardiac conduction"/>
    <property type="evidence" value="ECO:0000250"/>
    <property type="project" value="ARUK-UCL"/>
</dbReference>
<dbReference type="GO" id="GO:0045664">
    <property type="term" value="P:regulation of neuron differentiation"/>
    <property type="evidence" value="ECO:0000315"/>
    <property type="project" value="Alzheimers_University_of_Toronto"/>
</dbReference>
<dbReference type="GO" id="GO:0048488">
    <property type="term" value="P:synaptic vesicle endocytosis"/>
    <property type="evidence" value="ECO:0007669"/>
    <property type="project" value="Ensembl"/>
</dbReference>
<dbReference type="GO" id="GO:0033292">
    <property type="term" value="P:T-tubule organization"/>
    <property type="evidence" value="ECO:0000314"/>
    <property type="project" value="UniProtKB"/>
</dbReference>
<dbReference type="CDD" id="cd07611">
    <property type="entry name" value="BAR_Amphiphysin_I_II"/>
    <property type="match status" value="1"/>
</dbReference>
<dbReference type="CDD" id="cd12139">
    <property type="entry name" value="SH3_Bin1"/>
    <property type="match status" value="1"/>
</dbReference>
<dbReference type="FunFam" id="1.20.1270.60:FF:000013">
    <property type="entry name" value="Amphiphysin isoform 2"/>
    <property type="match status" value="1"/>
</dbReference>
<dbReference type="FunFam" id="2.30.30.40:FF:000029">
    <property type="entry name" value="myc box-dependent-interacting protein 1 isoform X2"/>
    <property type="match status" value="1"/>
</dbReference>
<dbReference type="Gene3D" id="1.20.1270.60">
    <property type="entry name" value="Arfaptin homology (AH) domain/BAR domain"/>
    <property type="match status" value="1"/>
</dbReference>
<dbReference type="Gene3D" id="2.30.30.40">
    <property type="entry name" value="SH3 Domains"/>
    <property type="match status" value="1"/>
</dbReference>
<dbReference type="InterPro" id="IPR027267">
    <property type="entry name" value="AH/BAR_dom_sf"/>
</dbReference>
<dbReference type="InterPro" id="IPR003005">
    <property type="entry name" value="Amphiphysin"/>
</dbReference>
<dbReference type="InterPro" id="IPR035471">
    <property type="entry name" value="Amphiphysin-2_SH3"/>
</dbReference>
<dbReference type="InterPro" id="IPR003023">
    <property type="entry name" value="Amphiphysin_2"/>
</dbReference>
<dbReference type="InterPro" id="IPR004148">
    <property type="entry name" value="BAR_dom"/>
</dbReference>
<dbReference type="InterPro" id="IPR036028">
    <property type="entry name" value="SH3-like_dom_sf"/>
</dbReference>
<dbReference type="InterPro" id="IPR001452">
    <property type="entry name" value="SH3_domain"/>
</dbReference>
<dbReference type="PANTHER" id="PTHR46514">
    <property type="entry name" value="AMPHIPHYSIN"/>
    <property type="match status" value="1"/>
</dbReference>
<dbReference type="PANTHER" id="PTHR46514:SF4">
    <property type="entry name" value="MYC BOX-DEPENDENT-INTERACTING PROTEIN 1"/>
    <property type="match status" value="1"/>
</dbReference>
<dbReference type="Pfam" id="PF03114">
    <property type="entry name" value="BAR"/>
    <property type="match status" value="1"/>
</dbReference>
<dbReference type="Pfam" id="PF14604">
    <property type="entry name" value="SH3_9"/>
    <property type="match status" value="1"/>
</dbReference>
<dbReference type="PRINTS" id="PR01251">
    <property type="entry name" value="AMPHIPHYSIN"/>
</dbReference>
<dbReference type="PRINTS" id="PR01253">
    <property type="entry name" value="AMPHIPHYSIN2"/>
</dbReference>
<dbReference type="PRINTS" id="PR00452">
    <property type="entry name" value="SH3DOMAIN"/>
</dbReference>
<dbReference type="SMART" id="SM00721">
    <property type="entry name" value="BAR"/>
    <property type="match status" value="1"/>
</dbReference>
<dbReference type="SMART" id="SM00326">
    <property type="entry name" value="SH3"/>
    <property type="match status" value="1"/>
</dbReference>
<dbReference type="SUPFAM" id="SSF103657">
    <property type="entry name" value="BAR/IMD domain-like"/>
    <property type="match status" value="1"/>
</dbReference>
<dbReference type="SUPFAM" id="SSF50044">
    <property type="entry name" value="SH3-domain"/>
    <property type="match status" value="1"/>
</dbReference>
<dbReference type="PROSITE" id="PS51021">
    <property type="entry name" value="BAR"/>
    <property type="match status" value="1"/>
</dbReference>
<dbReference type="PROSITE" id="PS50002">
    <property type="entry name" value="SH3"/>
    <property type="match status" value="1"/>
</dbReference>
<accession>O00499</accession>
<accession>O00297</accession>
<accession>O00545</accession>
<accession>O43867</accession>
<accession>O60552</accession>
<accession>O60553</accession>
<accession>O60554</accession>
<accession>O60555</accession>
<accession>O75514</accession>
<accession>O75515</accession>
<accession>O75516</accession>
<accession>O75517</accession>
<accession>O75518</accession>
<accession>Q659B7</accession>
<accession>Q92944</accession>
<accession>Q99688</accession>
<comment type="function">
    <text evidence="3 13 15 17 19">Is a key player in the control of plasma membrane curvature, membrane shaping and membrane remodeling. Required in muscle cells for the formation of T-tubules, tubular invaginations of the plasma membrane that function in depolarization-contraction coupling (PubMed:24755653). Is a negative regulator of endocytosis (By similarity). Is also involved in the regulation of intracellular vesicles sorting, modulation of BACE1 trafficking and the control of amyloid-beta production (PubMed:27179792). In neuronal circuits, endocytosis regulation may influence the internalization of PHF-tau aggregates (By similarity). May be involved in the regulation of MYC activity and the control cell proliferation (PubMed:8782822). Has actin bundling activity and stabilizes actin filaments against depolymerization in vitro (PubMed:28893863).</text>
</comment>
<comment type="subunit">
    <text evidence="2 3 8 9 11 15 17 21">Heterodimer with AMPH (By similarity). Binds SH3GLB1 (By similarity). Interacts (via SH3 domain) with DNM1. Interacts with SYNJ1 (By similarity). Interacts (via SH3 domain) with DNM2 (PubMed:17676042). Isoform IIA interacts with CLTC. Isoform IIB does not interact with CLTC. Isoform IIC1 does not interact with CLTC. Isoform IIC2 does not interact with CLTC (PubMed:9603201). Interacts with AP2A2. Interacts with AP2B1 (By similarity). Interacts with MYC (via N-terminal transactivation domain); the interaction requires the integrity of the conserved MYC box regions 1 and 2 (By similarity). Interacts with BIN2 (PubMed:10903846). Interacts with SNX4 (PubMed:12668730). Interacts (via BAR domain) with BACE1 (PubMed:27179792). Binds (via BAR domain) F-actin (PubMed:28893863).</text>
</comment>
<comment type="subunit">
    <text evidence="10">(Microbial infection) Interacts (SH3 domain) with HCV NS5A.</text>
</comment>
<comment type="interaction">
    <interactant intactId="EBI-719094">
        <id>O00499</id>
    </interactant>
    <interactant intactId="EBI-7121510">
        <id>P49418</id>
        <label>AMPH</label>
    </interactant>
    <organismsDiffer>false</organismsDiffer>
    <experiments>5</experiments>
</comment>
<comment type="interaction">
    <interactant intactId="EBI-719094">
        <id>O00499</id>
    </interactant>
    <interactant intactId="EBI-719094">
        <id>O00499</id>
        <label>BIN1</label>
    </interactant>
    <organismsDiffer>false</organismsDiffer>
    <experiments>3</experiments>
</comment>
<comment type="interaction">
    <interactant intactId="EBI-719094">
        <id>O00499</id>
    </interactant>
    <interactant intactId="EBI-2042570">
        <id>Q9UBW5</id>
        <label>BIN2</label>
    </interactant>
    <organismsDiffer>false</organismsDiffer>
    <experiments>4</experiments>
</comment>
<comment type="interaction">
    <interactant intactId="EBI-719094">
        <id>O00499</id>
    </interactant>
    <interactant intactId="EBI-722139">
        <id>Q9Y2H0</id>
        <label>DLGAP4</label>
    </interactant>
    <organismsDiffer>false</organismsDiffer>
    <experiments>4</experiments>
</comment>
<comment type="interaction">
    <interactant intactId="EBI-719094">
        <id>O00499</id>
    </interactant>
    <interactant intactId="EBI-712740">
        <id>P09467</id>
        <label>FBP1</label>
    </interactant>
    <organismsDiffer>false</organismsDiffer>
    <experiments>4</experiments>
</comment>
<comment type="interaction">
    <interactant intactId="EBI-719094">
        <id>O00499</id>
    </interactant>
    <interactant intactId="EBI-2864109">
        <id>Q13496</id>
        <label>MTM1</label>
    </interactant>
    <organismsDiffer>false</organismsDiffer>
    <experiments>6</experiments>
</comment>
<comment type="interaction">
    <interactant intactId="EBI-719094">
        <id>O00499</id>
    </interactant>
    <interactant intactId="EBI-7067016">
        <id>Q8NFH8</id>
        <label>REPS2</label>
    </interactant>
    <organismsDiffer>false</organismsDiffer>
    <experiments>6</experiments>
</comment>
<comment type="interaction">
    <interactant intactId="EBI-719094">
        <id>O00499</id>
    </interactant>
    <interactant intactId="EBI-1570523">
        <id>Q8TB24</id>
        <label>RIN3</label>
    </interactant>
    <organismsDiffer>false</organismsDiffer>
    <experiments>4</experiments>
</comment>
<comment type="interaction">
    <interactant intactId="EBI-719094">
        <id>O00499</id>
    </interactant>
    <interactant intactId="EBI-724909">
        <id>O95219</id>
        <label>SNX4</label>
    </interactant>
    <organismsDiffer>false</organismsDiffer>
    <experiments>4</experiments>
</comment>
<comment type="interaction">
    <interactant intactId="EBI-719094">
        <id>O00499</id>
    </interactant>
    <interactant intactId="EBI-717592">
        <id>Q13426</id>
        <label>XRCC4</label>
    </interactant>
    <organismsDiffer>false</organismsDiffer>
    <experiments>4</experiments>
</comment>
<comment type="interaction">
    <interactant intactId="EBI-719094">
        <id>O00499</id>
    </interactant>
    <interactant intactId="EBI-8753518">
        <id>PRO_0000037576</id>
        <dbReference type="UniProtKB" id="P27958"/>
    </interactant>
    <organismsDiffer>true</organismsDiffer>
    <experiments>11</experiments>
</comment>
<comment type="interaction">
    <interactant intactId="EBI-719094">
        <id>O00499</id>
    </interactant>
    <interactant intactId="EBI-6863748">
        <id>PRO_0000037551</id>
        <dbReference type="UniProtKB" id="Q9WMX2"/>
    </interactant>
    <organismsDiffer>true</organismsDiffer>
    <experiments>5</experiments>
</comment>
<comment type="interaction">
    <interactant intactId="EBI-6926280">
        <id>O00499-1</id>
    </interactant>
    <interactant intactId="EBI-6926270">
        <id>P10636-7</id>
        <label>MAPT</label>
    </interactant>
    <organismsDiffer>false</organismsDiffer>
    <experiments>5</experiments>
</comment>
<comment type="interaction">
    <interactant intactId="EBI-6926280">
        <id>O00499-1</id>
    </interactant>
    <interactant intactId="EBI-366233">
        <id>P10636-8</id>
        <label>MAPT</label>
    </interactant>
    <organismsDiffer>false</organismsDiffer>
    <experiments>6</experiments>
</comment>
<comment type="interaction">
    <interactant intactId="EBI-8870146">
        <id>O00499-7</id>
    </interactant>
    <interactant intactId="EBI-8753518">
        <id>PRO_0000037576</id>
        <dbReference type="UniProtKB" id="P27958"/>
    </interactant>
    <organismsDiffer>true</organismsDiffer>
    <experiments>2</experiments>
</comment>
<comment type="interaction">
    <interactant intactId="EBI-7689134">
        <id>O00499-10</id>
    </interactant>
    <interactant intactId="EBI-447544">
        <id>P01106</id>
        <label>MYC</label>
    </interactant>
    <organismsDiffer>false</organismsDiffer>
    <experiments>3</experiments>
</comment>
<comment type="interaction">
    <interactant intactId="EBI-7689211">
        <id>O00499-11</id>
    </interactant>
    <interactant intactId="EBI-447544">
        <id>P01106</id>
        <label>MYC</label>
    </interactant>
    <organismsDiffer>false</organismsDiffer>
    <experiments>2</experiments>
</comment>
<comment type="subcellular location">
    <molecule>Isoform BIN1</molecule>
    <subcellularLocation>
        <location evidence="19">Nucleus</location>
    </subcellularLocation>
    <subcellularLocation>
        <location evidence="20">Cytoplasm</location>
    </subcellularLocation>
    <subcellularLocation>
        <location evidence="2">Endosome</location>
    </subcellularLocation>
    <subcellularLocation>
        <location evidence="3">Cell membrane</location>
        <location evidence="3">Sarcolemma</location>
        <location evidence="3">T-tubule</location>
    </subcellularLocation>
</comment>
<comment type="subcellular location">
    <molecule>Isoform IIA</molecule>
    <subcellularLocation>
        <location evidence="20">Cytoplasm</location>
    </subcellularLocation>
</comment>
<comment type="alternative products">
    <event type="alternative splicing"/>
    <isoform>
        <id>O00499-1</id>
        <name>IIA</name>
        <sequence type="displayed"/>
    </isoform>
    <isoform>
        <id>O00499-2</id>
        <name>IIB</name>
        <sequence type="described" ref="VSP_000246 VSP_000252"/>
    </isoform>
    <isoform>
        <id>O00499-3</id>
        <name>IIC1</name>
        <sequence type="described" ref="VSP_000249"/>
    </isoform>
    <isoform>
        <id>O00499-4</id>
        <name>IIC2</name>
        <sequence type="described" ref="VSP_000246 VSP_000249"/>
    </isoform>
    <isoform>
        <id>O00499-5</id>
        <name>IID</name>
        <sequence type="described" ref="VSP_000248"/>
    </isoform>
    <isoform>
        <id>O00499-6</id>
        <name>II2</name>
        <sequence type="described" ref="VSP_000246 VSP_000253"/>
    </isoform>
    <isoform>
        <id>O00499-7</id>
        <name>II3</name>
        <sequence type="described" ref="VSP_000246 VSP_000250"/>
    </isoform>
    <isoform>
        <id>O00499-8</id>
        <name>BIN1</name>
        <sequence type="described" ref="VSP_000246 VSP_000247 VSP_000250"/>
    </isoform>
    <isoform>
        <id>O00499-9</id>
        <name>BIN1-10-13</name>
        <sequence type="described" ref="VSP_000246 VSP_000251"/>
    </isoform>
    <isoform>
        <id>O00499-10</id>
        <name>BIN1-13</name>
        <sequence type="described" ref="VSP_000246 VSP_000247 VSP_000251"/>
    </isoform>
    <isoform>
        <id>O00499-11</id>
        <name>BIN1+12A</name>
        <sequence type="described" ref="VSP_000246 VSP_000247 VSP_000253"/>
    </isoform>
    <text>Additional isoforms seem to exist.</text>
</comment>
<comment type="tissue specificity">
    <text evidence="8 16 20">Ubiquitous. Highest expression in the brain and muscle (PubMed:9182667). Expressed in oligodendrocytes (PubMed:27488240). Isoform IIA is expressed only in the brain, where it is detected in the gray matter, but not in the white matter (PubMed:27488240). Isoform BIN1 is widely expressed with highest expression in skeletal muscle.</text>
</comment>
<comment type="PTM">
    <text evidence="1">Phosphorylated by protein kinase C.</text>
</comment>
<comment type="disease" evidence="11 12 13 18">
    <disease id="DI-00253">
        <name>Myopathy, centronuclear, 2</name>
        <acronym>CNM2</acronym>
        <description>A congenital muscle disorder characterized by progressive muscular weakness and wasting involving mainly limb girdle, trunk, and neck muscles. It may also affect distal muscles. Weakness may be present during childhood or adolescence or may not become evident until the third decade of life. Ptosis is a frequent clinical feature. The most prominent histopathologic features include high frequency of centrally located nuclei in muscle fibers not secondary to regeneration, radial arrangement of sarcoplasmic strands around the central nuclei, and predominance and hypotrophy of type 1 fibers.</description>
        <dbReference type="MIM" id="255200"/>
    </disease>
    <text>The disease is caused by variants affecting the gene represented in this entry.</text>
</comment>
<comment type="disease">
    <text evidence="14">BIN1 mutations have been found in families segregating autosomal dominant centronuclear myopathy. Patients show adult-onset, mildly progressive muscle weakness affecting selected proximal muscles and all distal muscles of the lower limbs.</text>
</comment>
<comment type="sequence caution" evidence="27">
    <conflict type="erroneous initiation">
        <sequence resource="EMBL-CDS" id="AAC23441"/>
    </conflict>
    <text>Truncated N-terminus.</text>
</comment>
<comment type="online information" name="Atlas of Genetics and Cytogenetics in Oncology and Haematology">
    <link uri="https://atlasgeneticsoncology.org/gene/794/bin1-(bridging-integrator-1)"/>
</comment>
<proteinExistence type="evidence at protein level"/>
<reference key="1">
    <citation type="journal article" date="1997" name="J. Biol. Chem.">
        <title>Identification and characterization of a nerve terminal-enriched amphiphysin isoform.</title>
        <authorList>
            <person name="Ramjaun A.R."/>
            <person name="Micheva K.D."/>
            <person name="Bouchelet I."/>
            <person name="McPherson P.S."/>
        </authorList>
    </citation>
    <scope>NUCLEOTIDE SEQUENCE [MRNA] (ISOFORM IIA)</scope>
    <source>
        <tissue>Brain</tissue>
    </source>
</reference>
<reference key="2">
    <citation type="journal article" date="1997" name="J. Cell Biol.">
        <title>Amphiphysin II (SH3P9; BIN1), a member of the amphiphysin/Rvs family, is concentrated in the cortical cytomatrix of axon initial segments and nodes of Ranvier in brain and around T tubules in skeletal muscle.</title>
        <authorList>
            <person name="Butler M.H."/>
            <person name="David C."/>
            <person name="Ochoa G.-C."/>
            <person name="Freyberg Z."/>
            <person name="Daniell L."/>
            <person name="Grabs D."/>
            <person name="Cremona O."/>
            <person name="De Camilli P."/>
        </authorList>
    </citation>
    <scope>NUCLEOTIDE SEQUENCE [MRNA] (ISOFORMS IIA AND BIN1)</scope>
    <scope>TISSUE SPECIFICITY</scope>
    <scope>SUBCELLULAR LOCATION</scope>
    <source>
        <tissue>Brain</tissue>
        <tissue>Skeletal muscle</tissue>
    </source>
</reference>
<reference key="3">
    <citation type="journal article" date="1996" name="Nat. Genet.">
        <title>BIN1 is a novel Myc-interacting protein with features of a tumour suppressor.</title>
        <authorList>
            <person name="Sakamuro D."/>
            <person name="Elliott K.J."/>
            <person name="Wechsler-Reya R."/>
            <person name="Prendergast G.C."/>
        </authorList>
    </citation>
    <scope>NUCLEOTIDE SEQUENCE [MRNA] (ISOFORM BIN1)</scope>
    <scope>FUNCTION</scope>
    <scope>SUBCELLULAR LOCATION</scope>
    <source>
        <tissue>Skeletal muscle</tissue>
    </source>
</reference>
<reference key="4">
    <citation type="submission" date="1998-05" db="EMBL/GenBank/DDBJ databases">
        <authorList>
            <person name="Sakamuro D."/>
            <person name="Elliott K.J."/>
            <person name="Wechsler-Reya R."/>
            <person name="Prendergast G.C."/>
        </authorList>
    </citation>
    <scope>SEQUENCE REVISION TO N-TERMINUS</scope>
</reference>
<reference key="5">
    <citation type="journal article" date="1998" name="J. Neurochem.">
        <title>Multiple amphiphysin II splice variants display differential clathrin binding: identification of two distinct clathrin-binding sites.</title>
        <authorList>
            <person name="Ramjaun A.R."/>
            <person name="McPherson P.S."/>
        </authorList>
    </citation>
    <scope>NUCLEOTIDE SEQUENCE [MRNA] (ISOFORMS IIB; IIC1; IIC2 AND IID)</scope>
    <scope>INTERACTION WITH CLTC</scope>
    <source>
        <tissue>Brain</tissue>
    </source>
</reference>
<reference key="6">
    <citation type="journal article" date="1997" name="Biochem. Biophys. Res. Commun.">
        <title>cDNA cloning of a novel amphiphysin isoform and tissue-specific expression of its multiple splice variants.</title>
        <authorList>
            <person name="Tsutsui K."/>
            <person name="Maeda Y."/>
            <person name="Tsutsui K."/>
            <person name="Seki S."/>
            <person name="Tokunaga A."/>
        </authorList>
    </citation>
    <scope>NUCLEOTIDE SEQUENCE [MRNA] (ISOFORMS II2 AND II3)</scope>
    <source>
        <tissue>Brain</tissue>
    </source>
</reference>
<reference key="7">
    <citation type="journal article" date="1997" name="J. Biol. Chem.">
        <title>Structural analysis of the human BIN1 gene. Evidence for tissue-specific transcriptional regulation and alternate RNA splicing.</title>
        <authorList>
            <person name="Wechsler-Reya R.J."/>
            <person name="Sakamuro D."/>
            <person name="Zhang J."/>
            <person name="Duhadaway J."/>
            <person name="Prendergast G.C."/>
        </authorList>
    </citation>
    <scope>NUCLEOTIDE SEQUENCE [GENOMIC DNA / MRNA] (ISOFORMS II3; II3; BIN1-10-13; BIN1-13 AND BIN1+12A)</scope>
    <source>
        <tissue>Fibroblast</tissue>
    </source>
</reference>
<reference key="8">
    <citation type="submission" date="1998-05" db="EMBL/GenBank/DDBJ databases">
        <authorList>
            <person name="Zhang J."/>
            <person name="Du W."/>
            <person name="Wechsler-Reya R.J."/>
            <person name="Duhadaway J."/>
            <person name="Sakamuro D."/>
            <person name="Prendergast G.C."/>
        </authorList>
    </citation>
    <scope>NUCLEOTIDE SEQUENCE (ISOFORM II2)</scope>
</reference>
<reference key="9">
    <citation type="journal article" date="2007" name="BMC Genomics">
        <title>The full-ORF clone resource of the German cDNA consortium.</title>
        <authorList>
            <person name="Bechtel S."/>
            <person name="Rosenfelder H."/>
            <person name="Duda A."/>
            <person name="Schmidt C.P."/>
            <person name="Ernst U."/>
            <person name="Wellenreuther R."/>
            <person name="Mehrle A."/>
            <person name="Schuster C."/>
            <person name="Bahr A."/>
            <person name="Bloecker H."/>
            <person name="Heubner D."/>
            <person name="Hoerlein A."/>
            <person name="Michel G."/>
            <person name="Wedler H."/>
            <person name="Koehrer K."/>
            <person name="Ottenwaelder B."/>
            <person name="Poustka A."/>
            <person name="Wiemann S."/>
            <person name="Schupp I."/>
        </authorList>
    </citation>
    <scope>NUCLEOTIDE SEQUENCE [LARGE SCALE MRNA] (ISOFORM IIA)</scope>
    <source>
        <tissue>Brain</tissue>
    </source>
</reference>
<reference key="10">
    <citation type="journal article" date="2005" name="Nature">
        <title>Generation and annotation of the DNA sequences of human chromosomes 2 and 4.</title>
        <authorList>
            <person name="Hillier L.W."/>
            <person name="Graves T.A."/>
            <person name="Fulton R.S."/>
            <person name="Fulton L.A."/>
            <person name="Pepin K.H."/>
            <person name="Minx P."/>
            <person name="Wagner-McPherson C."/>
            <person name="Layman D."/>
            <person name="Wylie K."/>
            <person name="Sekhon M."/>
            <person name="Becker M.C."/>
            <person name="Fewell G.A."/>
            <person name="Delehaunty K.D."/>
            <person name="Miner T.L."/>
            <person name="Nash W.E."/>
            <person name="Kremitzki C."/>
            <person name="Oddy L."/>
            <person name="Du H."/>
            <person name="Sun H."/>
            <person name="Bradshaw-Cordum H."/>
            <person name="Ali J."/>
            <person name="Carter J."/>
            <person name="Cordes M."/>
            <person name="Harris A."/>
            <person name="Isak A."/>
            <person name="van Brunt A."/>
            <person name="Nguyen C."/>
            <person name="Du F."/>
            <person name="Courtney L."/>
            <person name="Kalicki J."/>
            <person name="Ozersky P."/>
            <person name="Abbott S."/>
            <person name="Armstrong J."/>
            <person name="Belter E.A."/>
            <person name="Caruso L."/>
            <person name="Cedroni M."/>
            <person name="Cotton M."/>
            <person name="Davidson T."/>
            <person name="Desai A."/>
            <person name="Elliott G."/>
            <person name="Erb T."/>
            <person name="Fronick C."/>
            <person name="Gaige T."/>
            <person name="Haakenson W."/>
            <person name="Haglund K."/>
            <person name="Holmes A."/>
            <person name="Harkins R."/>
            <person name="Kim K."/>
            <person name="Kruchowski S.S."/>
            <person name="Strong C.M."/>
            <person name="Grewal N."/>
            <person name="Goyea E."/>
            <person name="Hou S."/>
            <person name="Levy A."/>
            <person name="Martinka S."/>
            <person name="Mead K."/>
            <person name="McLellan M.D."/>
            <person name="Meyer R."/>
            <person name="Randall-Maher J."/>
            <person name="Tomlinson C."/>
            <person name="Dauphin-Kohlberg S."/>
            <person name="Kozlowicz-Reilly A."/>
            <person name="Shah N."/>
            <person name="Swearengen-Shahid S."/>
            <person name="Snider J."/>
            <person name="Strong J.T."/>
            <person name="Thompson J."/>
            <person name="Yoakum M."/>
            <person name="Leonard S."/>
            <person name="Pearman C."/>
            <person name="Trani L."/>
            <person name="Radionenko M."/>
            <person name="Waligorski J.E."/>
            <person name="Wang C."/>
            <person name="Rock S.M."/>
            <person name="Tin-Wollam A.-M."/>
            <person name="Maupin R."/>
            <person name="Latreille P."/>
            <person name="Wendl M.C."/>
            <person name="Yang S.-P."/>
            <person name="Pohl C."/>
            <person name="Wallis J.W."/>
            <person name="Spieth J."/>
            <person name="Bieri T.A."/>
            <person name="Berkowicz N."/>
            <person name="Nelson J.O."/>
            <person name="Osborne J."/>
            <person name="Ding L."/>
            <person name="Meyer R."/>
            <person name="Sabo A."/>
            <person name="Shotland Y."/>
            <person name="Sinha P."/>
            <person name="Wohldmann P.E."/>
            <person name="Cook L.L."/>
            <person name="Hickenbotham M.T."/>
            <person name="Eldred J."/>
            <person name="Williams D."/>
            <person name="Jones T.A."/>
            <person name="She X."/>
            <person name="Ciccarelli F.D."/>
            <person name="Izaurralde E."/>
            <person name="Taylor J."/>
            <person name="Schmutz J."/>
            <person name="Myers R.M."/>
            <person name="Cox D.R."/>
            <person name="Huang X."/>
            <person name="McPherson J.D."/>
            <person name="Mardis E.R."/>
            <person name="Clifton S.W."/>
            <person name="Warren W.C."/>
            <person name="Chinwalla A.T."/>
            <person name="Eddy S.R."/>
            <person name="Marra M.A."/>
            <person name="Ovcharenko I."/>
            <person name="Furey T.S."/>
            <person name="Miller W."/>
            <person name="Eichler E.E."/>
            <person name="Bork P."/>
            <person name="Suyama M."/>
            <person name="Torrents D."/>
            <person name="Waterston R.H."/>
            <person name="Wilson R.K."/>
        </authorList>
    </citation>
    <scope>NUCLEOTIDE SEQUENCE [LARGE SCALE GENOMIC DNA]</scope>
</reference>
<reference key="11">
    <citation type="submission" date="2005-07" db="EMBL/GenBank/DDBJ databases">
        <authorList>
            <person name="Mural R.J."/>
            <person name="Istrail S."/>
            <person name="Sutton G.G."/>
            <person name="Florea L."/>
            <person name="Halpern A.L."/>
            <person name="Mobarry C.M."/>
            <person name="Lippert R."/>
            <person name="Walenz B."/>
            <person name="Shatkay H."/>
            <person name="Dew I."/>
            <person name="Miller J.R."/>
            <person name="Flanigan M.J."/>
            <person name="Edwards N.J."/>
            <person name="Bolanos R."/>
            <person name="Fasulo D."/>
            <person name="Halldorsson B.V."/>
            <person name="Hannenhalli S."/>
            <person name="Turner R."/>
            <person name="Yooseph S."/>
            <person name="Lu F."/>
            <person name="Nusskern D.R."/>
            <person name="Shue B.C."/>
            <person name="Zheng X.H."/>
            <person name="Zhong F."/>
            <person name="Delcher A.L."/>
            <person name="Huson D.H."/>
            <person name="Kravitz S.A."/>
            <person name="Mouchard L."/>
            <person name="Reinert K."/>
            <person name="Remington K.A."/>
            <person name="Clark A.G."/>
            <person name="Waterman M.S."/>
            <person name="Eichler E.E."/>
            <person name="Adams M.D."/>
            <person name="Hunkapiller M.W."/>
            <person name="Myers E.W."/>
            <person name="Venter J.C."/>
        </authorList>
    </citation>
    <scope>NUCLEOTIDE SEQUENCE [LARGE SCALE GENOMIC DNA]</scope>
</reference>
<reference key="12">
    <citation type="submission" date="1998-06" db="EMBL/GenBank/DDBJ databases">
        <authorList>
            <person name="Yu W."/>
            <person name="Gibbs R.A."/>
        </authorList>
    </citation>
    <scope>NUCLEOTIDE SEQUENCE [LARGE SCALE MRNA] OF 133-593</scope>
    <source>
        <tissue>Brain</tissue>
    </source>
</reference>
<reference key="13">
    <citation type="journal article" date="1998" name="Mol. Cell. Biol.">
        <title>A role for the putative tumor suppressor Bin1 in muscle cell differentiation.</title>
        <authorList>
            <person name="Wechsler-Reya R.J."/>
            <person name="Elliott K.J."/>
            <person name="Prendergast G.C."/>
        </authorList>
    </citation>
    <scope>CHARACTERIZATION</scope>
    <source>
        <tissue>Skeletal muscle</tissue>
    </source>
</reference>
<reference key="14">
    <citation type="journal article" date="2000" name="Genomics">
        <title>Bin2, a functionally nonredundant member of the BAR adaptor gene family.</title>
        <authorList>
            <person name="Ge K."/>
            <person name="Prendergast G.C."/>
        </authorList>
    </citation>
    <scope>INTERACTION WITH BIN2</scope>
    <scope>TISSUE SPECIFICITY</scope>
</reference>
<reference key="15">
    <citation type="journal article" date="2003" name="J. Cell Sci.">
        <title>Sorting nexin 4 and amphiphysin 2, a new partnership between endocytosis and intracellular trafficking.</title>
        <authorList>
            <person name="Leprince C."/>
            <person name="Le Scolan E."/>
            <person name="Meunier B."/>
            <person name="Fraisier V."/>
            <person name="Brandon N."/>
            <person name="De Gunzburg J."/>
            <person name="Camonis J."/>
        </authorList>
    </citation>
    <scope>INTERACTION WITH SNX4</scope>
</reference>
<reference key="16">
    <citation type="journal article" date="2006" name="Cell">
        <title>Global, in vivo, and site-specific phosphorylation dynamics in signaling networks.</title>
        <authorList>
            <person name="Olsen J.V."/>
            <person name="Blagoev B."/>
            <person name="Gnad F."/>
            <person name="Macek B."/>
            <person name="Kumar C."/>
            <person name="Mortensen P."/>
            <person name="Mann M."/>
        </authorList>
    </citation>
    <scope>PHOSPHORYLATION [LARGE SCALE ANALYSIS] AT SER-303</scope>
    <scope>IDENTIFICATION BY MASS SPECTROMETRY [LARGE SCALE ANALYSIS]</scope>
    <source>
        <tissue>Cervix carcinoma</tissue>
    </source>
</reference>
<reference key="17">
    <citation type="journal article" date="2006" name="Gastroenterology">
        <title>The SH3 binding motif of HCV NS5A protein interacts with Bin1 and is important for apoptosis and infectivity.</title>
        <authorList>
            <person name="Nanda S.K."/>
            <person name="Herion D."/>
            <person name="Liang T.J."/>
        </authorList>
    </citation>
    <scope>INTERACTION WITH HCV NS5A (MICROBIAL INFECTION)</scope>
</reference>
<reference key="18">
    <citation type="journal article" date="2007" name="Nat. Genet.">
        <title>Mutations in amphiphysin 2 (BIN1) disrupt interaction with dynamin 2 and cause autosomal recessive centronuclear myopathy.</title>
        <authorList>
            <person name="Nicot A.-S."/>
            <person name="Toussaint A."/>
            <person name="Tosch V."/>
            <person name="Kretz C."/>
            <person name="Wallgren-Pettersson C."/>
            <person name="Iwarsson E."/>
            <person name="Kingston H."/>
            <person name="Garnier J.-M."/>
            <person name="Biancalana V."/>
            <person name="Oldfors A."/>
            <person name="Mandel J.-L."/>
            <person name="Laporte J."/>
        </authorList>
    </citation>
    <scope>INTERACTION WITH DNM2</scope>
    <scope>INVOLVEMENT IN CNM2</scope>
    <scope>VARIANTS CNM2 ASN-35; ASN-151 AND 575-LYS--PRO-593 DEL</scope>
    <scope>CHARACTERIZATION OF VARIANTS CNM2 ASN-151 AND 575-LYS--PRO-593 DEL</scope>
</reference>
<reference key="19">
    <citation type="journal article" date="2008" name="J. Proteome Res.">
        <title>Phosphorylation analysis of primary human T lymphocytes using sequential IMAC and titanium oxide enrichment.</title>
        <authorList>
            <person name="Carrascal M."/>
            <person name="Ovelleiro D."/>
            <person name="Casas V."/>
            <person name="Gay M."/>
            <person name="Abian J."/>
        </authorList>
    </citation>
    <scope>PHOSPHORYLATION [LARGE SCALE ANALYSIS] AT THR-307</scope>
    <scope>IDENTIFICATION BY MASS SPECTROMETRY [LARGE SCALE ANALYSIS]</scope>
    <source>
        <tissue>T-cell</tissue>
    </source>
</reference>
<reference key="20">
    <citation type="journal article" date="2008" name="Proc. Natl. Acad. Sci. U.S.A.">
        <title>A quantitative atlas of mitotic phosphorylation.</title>
        <authorList>
            <person name="Dephoure N."/>
            <person name="Zhou C."/>
            <person name="Villen J."/>
            <person name="Beausoleil S.A."/>
            <person name="Bakalarski C.E."/>
            <person name="Elledge S.J."/>
            <person name="Gygi S.P."/>
        </authorList>
    </citation>
    <scope>PHOSPHORYLATION [LARGE SCALE ANALYSIS] AT SER-296; SER-298; SER-303; THR-307; THR-323 AND SER-331</scope>
    <scope>IDENTIFICATION BY MASS SPECTROMETRY [LARGE SCALE ANALYSIS]</scope>
    <source>
        <tissue>Cervix carcinoma</tissue>
    </source>
</reference>
<reference key="21">
    <citation type="journal article" date="2009" name="Anal. Chem.">
        <title>Lys-N and trypsin cover complementary parts of the phosphoproteome in a refined SCX-based approach.</title>
        <authorList>
            <person name="Gauci S."/>
            <person name="Helbig A.O."/>
            <person name="Slijper M."/>
            <person name="Krijgsveld J."/>
            <person name="Heck A.J."/>
            <person name="Mohammed S."/>
        </authorList>
    </citation>
    <scope>IDENTIFICATION BY MASS SPECTROMETRY [LARGE SCALE ANALYSIS]</scope>
</reference>
<reference key="22">
    <citation type="journal article" date="2009" name="Sci. Signal.">
        <title>Quantitative phosphoproteomic analysis of T cell receptor signaling reveals system-wide modulation of protein-protein interactions.</title>
        <authorList>
            <person name="Mayya V."/>
            <person name="Lundgren D.H."/>
            <person name="Hwang S.-I."/>
            <person name="Rezaul K."/>
            <person name="Wu L."/>
            <person name="Eng J.K."/>
            <person name="Rodionov V."/>
            <person name="Han D.K."/>
        </authorList>
    </citation>
    <scope>IDENTIFICATION BY MASS SPECTROMETRY [LARGE SCALE ANALYSIS]</scope>
    <source>
        <tissue>Leukemic T-cell</tissue>
    </source>
</reference>
<reference key="23">
    <citation type="journal article" date="2010" name="Sci. Signal.">
        <title>Quantitative phosphoproteomics reveals widespread full phosphorylation site occupancy during mitosis.</title>
        <authorList>
            <person name="Olsen J.V."/>
            <person name="Vermeulen M."/>
            <person name="Santamaria A."/>
            <person name="Kumar C."/>
            <person name="Miller M.L."/>
            <person name="Jensen L.J."/>
            <person name="Gnad F."/>
            <person name="Cox J."/>
            <person name="Jensen T.S."/>
            <person name="Nigg E.A."/>
            <person name="Brunak S."/>
            <person name="Mann M."/>
        </authorList>
    </citation>
    <scope>PHOSPHORYLATION [LARGE SCALE ANALYSIS] AT SER-296; THR-323 AND SER-331</scope>
    <scope>IDENTIFICATION BY MASS SPECTROMETRY [LARGE SCALE ANALYSIS]</scope>
    <source>
        <tissue>Cervix carcinoma</tissue>
    </source>
</reference>
<reference key="24">
    <citation type="journal article" date="2012" name="Proc. Natl. Acad. Sci. U.S.A.">
        <title>N-terminal acetylome analyses and functional insights of the N-terminal acetyltransferase NatB.</title>
        <authorList>
            <person name="Van Damme P."/>
            <person name="Lasa M."/>
            <person name="Polevoda B."/>
            <person name="Gazquez C."/>
            <person name="Elosegui-Artola A."/>
            <person name="Kim D.S."/>
            <person name="De Juan-Pardo E."/>
            <person name="Demeyer K."/>
            <person name="Hole K."/>
            <person name="Larrea E."/>
            <person name="Timmerman E."/>
            <person name="Prieto J."/>
            <person name="Arnesen T."/>
            <person name="Sherman F."/>
            <person name="Gevaert K."/>
            <person name="Aldabe R."/>
        </authorList>
    </citation>
    <scope>ACETYLATION [LARGE SCALE ANALYSIS] AT ALA-2</scope>
    <scope>CLEAVAGE OF INITIATOR METHIONINE [LARGE SCALE ANALYSIS]</scope>
    <scope>IDENTIFICATION BY MASS SPECTROMETRY [LARGE SCALE ANALYSIS]</scope>
</reference>
<reference key="25">
    <citation type="journal article" date="2013" name="J. Proteome Res.">
        <title>Toward a comprehensive characterization of a human cancer cell phosphoproteome.</title>
        <authorList>
            <person name="Zhou H."/>
            <person name="Di Palma S."/>
            <person name="Preisinger C."/>
            <person name="Peng M."/>
            <person name="Polat A.N."/>
            <person name="Heck A.J."/>
            <person name="Mohammed S."/>
        </authorList>
    </citation>
    <scope>PHOSPHORYLATION [LARGE SCALE ANALYSIS] AT SER-296; SER-298 AND SER-303</scope>
    <scope>IDENTIFICATION BY MASS SPECTROMETRY [LARGE SCALE ANALYSIS]</scope>
    <source>
        <tissue>Cervix carcinoma</tissue>
    </source>
</reference>
<reference key="26">
    <citation type="journal article" date="2014" name="J. Proteomics">
        <title>An enzyme assisted RP-RPLC approach for in-depth analysis of human liver phosphoproteome.</title>
        <authorList>
            <person name="Bian Y."/>
            <person name="Song C."/>
            <person name="Cheng K."/>
            <person name="Dong M."/>
            <person name="Wang F."/>
            <person name="Huang J."/>
            <person name="Sun D."/>
            <person name="Wang L."/>
            <person name="Ye M."/>
            <person name="Zou H."/>
        </authorList>
    </citation>
    <scope>PHOSPHORYLATION [LARGE SCALE ANALYSIS] AT SER-296 AND SER-298</scope>
    <scope>IDENTIFICATION BY MASS SPECTROMETRY [LARGE SCALE ANALYSIS]</scope>
    <source>
        <tissue>Liver</tissue>
    </source>
</reference>
<reference key="27">
    <citation type="journal article" date="2014" name="PLoS ONE">
        <title>Mutations in BIN1 associated with centronuclear myopathy disrupt membrane remodeling by affecting protein density and oligomerization.</title>
        <authorList>
            <person name="Wu T."/>
            <person name="Shi Z."/>
            <person name="Baumgart T."/>
        </authorList>
    </citation>
    <scope>FUNCTION</scope>
    <scope>CHARACTERIZATION OF VARIANTS CNM2 ASN-151 AND GLN-154</scope>
</reference>
<reference key="28">
    <citation type="journal article" date="2016" name="Hum. Mol. Genet.">
        <title>BIN1 regulates BACE1 intracellular trafficking and amyloid-beta production.</title>
        <authorList>
            <person name="Miyagawa T."/>
            <person name="Ebinuma I."/>
            <person name="Morohashi Y."/>
            <person name="Hori Y."/>
            <person name="Young Chang M."/>
            <person name="Hattori H."/>
            <person name="Maehara T."/>
            <person name="Yokoshima S."/>
            <person name="Fukuyama T."/>
            <person name="Tsuji S."/>
            <person name="Iwatsubo T."/>
            <person name="Prendergast G.C."/>
            <person name="Tomita T."/>
        </authorList>
    </citation>
    <scope>FUNCTION</scope>
    <scope>INTERACTION WITH BACE1</scope>
</reference>
<reference key="29">
    <citation type="journal article" date="2016" name="Mol. Neurodegener.">
        <title>Predominant expression of Alzheimer's disease-associated BIN1 in mature oligodendrocytes and localization to white matter tracts.</title>
        <authorList>
            <person name="De Rossi P."/>
            <person name="Buggia-Prevot V."/>
            <person name="Clayton B.L."/>
            <person name="Vasquez J.B."/>
            <person name="van Sanford C."/>
            <person name="Andrew R.J."/>
            <person name="Lesnick R."/>
            <person name="Botte A."/>
            <person name="Deyts C."/>
            <person name="Salem S."/>
            <person name="Rao E."/>
            <person name="Rice R.C."/>
            <person name="Parent A."/>
            <person name="Kar S."/>
            <person name="Popko B."/>
            <person name="Pytel P."/>
            <person name="Estus S."/>
            <person name="Thinakaran G."/>
        </authorList>
    </citation>
    <scope>TISSUE SPECIFICITY</scope>
</reference>
<reference key="30">
    <citation type="journal article" date="2017" name="EMBO Rep.">
        <title>Bin1 directly remodels actin dynamics through its BAR domain.</title>
        <authorList>
            <person name="Draeger N.M."/>
            <person name="Nachman E."/>
            <person name="Winterhoff M."/>
            <person name="Bruehmann S."/>
            <person name="Shah P."/>
            <person name="Katsinelos T."/>
            <person name="Boulant S."/>
            <person name="Teleman A.A."/>
            <person name="Faix J."/>
            <person name="Jahn T.R."/>
        </authorList>
    </citation>
    <scope>FUNCTION</scope>
    <scope>INTERACTION WITH F-ACTIN</scope>
</reference>
<reference key="31">
    <citation type="journal article" date="2010" name="Neurology">
        <title>Phenotype of a patient with recessive centronuclear myopathy and a novel BIN1 mutation.</title>
        <authorList>
            <person name="Claeys K.G."/>
            <person name="Maisonobe T."/>
            <person name="Boehm J."/>
            <person name="Laporte J."/>
            <person name="Hezode M."/>
            <person name="Romero N.B."/>
            <person name="Brochier G."/>
            <person name="Bitoun M."/>
            <person name="Carlier R.Y."/>
            <person name="Stojkovic T."/>
        </authorList>
    </citation>
    <scope>VARIANT CNM2 GLN-154</scope>
</reference>
<reference key="32">
    <citation type="journal article" date="2014" name="Brain">
        <title>Adult-onset autosomal dominant centronuclear myopathy due to BIN1 mutations.</title>
        <authorList>
            <person name="Boehm J."/>
            <person name="Biancalana V."/>
            <person name="Malfatti E."/>
            <person name="Dondaine N."/>
            <person name="Koch C."/>
            <person name="Vasli N."/>
            <person name="Kress W."/>
            <person name="Strittmatter M."/>
            <person name="Taratuto A.L."/>
            <person name="Gonorazky H."/>
            <person name="Laforet P."/>
            <person name="Maisonobe T."/>
            <person name="Olive M."/>
            <person name="Gonzalez-Mera L."/>
            <person name="Fardeau M."/>
            <person name="Carriere N."/>
            <person name="Clavelou P."/>
            <person name="Eymard B."/>
            <person name="Bitoun M."/>
            <person name="Rendu J."/>
            <person name="Faure J."/>
            <person name="Weis J."/>
            <person name="Mandel J.L."/>
            <person name="Romero N.B."/>
            <person name="Laporte J."/>
        </authorList>
    </citation>
    <scope>INVOLVEMENT IN AUTOSOMAL DOMINANT CENTRONUCLEAR MYOPATHY</scope>
    <scope>VARIANTS LYS-21 DEL AND CYS-24</scope>
</reference>
<reference key="33">
    <citation type="journal article" date="2018" name="Neurology">
        <title>A Roma founder BIN1 mutation causes a novel phenotype of centronuclear myopathy with rigid spine.</title>
        <authorList>
            <person name="Cabrera-Serrano M."/>
            <person name="Mavillard F."/>
            <person name="Biancalana V."/>
            <person name="Rivas E."/>
            <person name="Morar B."/>
            <person name="Hernandez-Lain A."/>
            <person name="Olive M."/>
            <person name="Muelas N."/>
            <person name="Khan E."/>
            <person name="Carvajal A."/>
            <person name="Quiroga P."/>
            <person name="Diaz-Manera J."/>
            <person name="Davis M."/>
            <person name="Avila R."/>
            <person name="Dominguez C."/>
            <person name="Romero N.B."/>
            <person name="Vilchez J.J."/>
            <person name="Comas D."/>
            <person name="Laing N.G."/>
            <person name="Laporte J."/>
            <person name="Kalaydjieva L."/>
            <person name="Paradas C."/>
        </authorList>
    </citation>
    <scope>VARIANTS CNM2 CYS-145 AND CYS-234</scope>
</reference>
<name>BIN1_HUMAN</name>
<organism>
    <name type="scientific">Homo sapiens</name>
    <name type="common">Human</name>
    <dbReference type="NCBI Taxonomy" id="9606"/>
    <lineage>
        <taxon>Eukaryota</taxon>
        <taxon>Metazoa</taxon>
        <taxon>Chordata</taxon>
        <taxon>Craniata</taxon>
        <taxon>Vertebrata</taxon>
        <taxon>Euteleostomi</taxon>
        <taxon>Mammalia</taxon>
        <taxon>Eutheria</taxon>
        <taxon>Euarchontoglires</taxon>
        <taxon>Primates</taxon>
        <taxon>Haplorrhini</taxon>
        <taxon>Catarrhini</taxon>
        <taxon>Hominidae</taxon>
        <taxon>Homo</taxon>
    </lineage>
</organism>
<sequence>MAEMGSKGVTAGKIASNVQKKLTRAQEKVLQKLGKADETKDEQFEQCVQNFNKQLTEGTRLQKDLRTYLASVKAMHEASKKLNECLQEVYEPDWPGRDEANKIAENNDLLWMDYHQKLVDQALLTMDTYLGQFPDIKSRIAKRGRKLVDYDSARHHYESLQTAKKKDEAKIAKPVSLLEKAAPQWCQGKLQAHLVAQTNLLRNQAEEELIKAQKVFEEMNVDLQEELPSLWNSRVGFYVNTFQSIAGLEENFHKEMSKLNQNLNDVLVGLEKQHGSNTFTVKAQPSDNAPAKGNKSPSPPDGSPAATPEIRVNHEPEPAGGATPGATLPKSPSQLRKGPPVPPPPKHTPSKEVKQEQILSLFEDTFVPEISVTTPSQFEAPGPFSEQASLLDLDFDPLPPVTSPVKAPTPSGQSIPWDLWEPTESPAGSLPSGEPSAAEGTFAVSWPSQTAEPGPAQPAEASEVAGGTQPAAGAQEPGETAASEAASSSLPAVVVETFPATVNGTVEGGSGAGRLDLPPGFMFKVQAQHDYTATDTDELQLKAGDVVLVIPFQNPEEQDEGWLMGVKESDWNQHKELEKCRGVFPENFTERVP</sequence>